<feature type="chain" id="PRO_0000111376" description="Small ribosomal subunit protein uS9">
    <location>
        <begin position="1"/>
        <end position="130"/>
    </location>
</feature>
<feature type="region of interest" description="Disordered" evidence="2">
    <location>
        <begin position="109"/>
        <end position="130"/>
    </location>
</feature>
<accession>Q8EWW8</accession>
<proteinExistence type="inferred from homology"/>
<protein>
    <recommendedName>
        <fullName evidence="1">Small ribosomal subunit protein uS9</fullName>
    </recommendedName>
    <alternativeName>
        <fullName evidence="3">30S ribosomal protein S9</fullName>
    </alternativeName>
</protein>
<reference key="1">
    <citation type="journal article" date="2002" name="Nucleic Acids Res.">
        <title>The complete genomic sequence of Mycoplasma penetrans, an intracellular bacterial pathogen in humans.</title>
        <authorList>
            <person name="Sasaki Y."/>
            <person name="Ishikawa J."/>
            <person name="Yamashita A."/>
            <person name="Oshima K."/>
            <person name="Kenri T."/>
            <person name="Furuya K."/>
            <person name="Yoshino C."/>
            <person name="Horino A."/>
            <person name="Shiba T."/>
            <person name="Sasaki T."/>
            <person name="Hattori M."/>
        </authorList>
    </citation>
    <scope>NUCLEOTIDE SEQUENCE [LARGE SCALE GENOMIC DNA]</scope>
    <source>
        <strain>HF-2</strain>
    </source>
</reference>
<keyword id="KW-1185">Reference proteome</keyword>
<keyword id="KW-0687">Ribonucleoprotein</keyword>
<keyword id="KW-0689">Ribosomal protein</keyword>
<gene>
    <name evidence="1" type="primary">rpsI</name>
    <name type="ordered locus">MYPE820</name>
</gene>
<organism>
    <name type="scientific">Malacoplasma penetrans (strain HF-2)</name>
    <name type="common">Mycoplasma penetrans</name>
    <dbReference type="NCBI Taxonomy" id="272633"/>
    <lineage>
        <taxon>Bacteria</taxon>
        <taxon>Bacillati</taxon>
        <taxon>Mycoplasmatota</taxon>
        <taxon>Mycoplasmoidales</taxon>
        <taxon>Mycoplasmoidaceae</taxon>
        <taxon>Malacoplasma</taxon>
    </lineage>
</organism>
<name>RS9_MALP2</name>
<dbReference type="EMBL" id="BA000026">
    <property type="protein sequence ID" value="BAC43872.1"/>
    <property type="molecule type" value="Genomic_DNA"/>
</dbReference>
<dbReference type="RefSeq" id="WP_011076908.1">
    <property type="nucleotide sequence ID" value="NC_004432.1"/>
</dbReference>
<dbReference type="SMR" id="Q8EWW8"/>
<dbReference type="FunCoup" id="Q8EWW8">
    <property type="interactions" value="274"/>
</dbReference>
<dbReference type="STRING" id="272633.gene:10731173"/>
<dbReference type="KEGG" id="mpe:MYPE820"/>
<dbReference type="eggNOG" id="COG0103">
    <property type="taxonomic scope" value="Bacteria"/>
</dbReference>
<dbReference type="HOGENOM" id="CLU_046483_2_1_14"/>
<dbReference type="InParanoid" id="Q8EWW8"/>
<dbReference type="Proteomes" id="UP000002522">
    <property type="component" value="Chromosome"/>
</dbReference>
<dbReference type="GO" id="GO:0022627">
    <property type="term" value="C:cytosolic small ribosomal subunit"/>
    <property type="evidence" value="ECO:0007669"/>
    <property type="project" value="TreeGrafter"/>
</dbReference>
<dbReference type="GO" id="GO:0003723">
    <property type="term" value="F:RNA binding"/>
    <property type="evidence" value="ECO:0007669"/>
    <property type="project" value="TreeGrafter"/>
</dbReference>
<dbReference type="GO" id="GO:0003735">
    <property type="term" value="F:structural constituent of ribosome"/>
    <property type="evidence" value="ECO:0007669"/>
    <property type="project" value="InterPro"/>
</dbReference>
<dbReference type="GO" id="GO:0006412">
    <property type="term" value="P:translation"/>
    <property type="evidence" value="ECO:0007669"/>
    <property type="project" value="UniProtKB-UniRule"/>
</dbReference>
<dbReference type="FunFam" id="3.30.230.10:FF:000001">
    <property type="entry name" value="30S ribosomal protein S9"/>
    <property type="match status" value="1"/>
</dbReference>
<dbReference type="Gene3D" id="3.30.230.10">
    <property type="match status" value="1"/>
</dbReference>
<dbReference type="HAMAP" id="MF_00532_B">
    <property type="entry name" value="Ribosomal_uS9_B"/>
    <property type="match status" value="1"/>
</dbReference>
<dbReference type="InterPro" id="IPR020568">
    <property type="entry name" value="Ribosomal_Su5_D2-typ_SF"/>
</dbReference>
<dbReference type="InterPro" id="IPR000754">
    <property type="entry name" value="Ribosomal_uS9"/>
</dbReference>
<dbReference type="InterPro" id="IPR023035">
    <property type="entry name" value="Ribosomal_uS9_bac/plastid"/>
</dbReference>
<dbReference type="InterPro" id="IPR020574">
    <property type="entry name" value="Ribosomal_uS9_CS"/>
</dbReference>
<dbReference type="InterPro" id="IPR014721">
    <property type="entry name" value="Ribsml_uS5_D2-typ_fold_subgr"/>
</dbReference>
<dbReference type="NCBIfam" id="NF001099">
    <property type="entry name" value="PRK00132.1"/>
    <property type="match status" value="1"/>
</dbReference>
<dbReference type="PANTHER" id="PTHR21569">
    <property type="entry name" value="RIBOSOMAL PROTEIN S9"/>
    <property type="match status" value="1"/>
</dbReference>
<dbReference type="PANTHER" id="PTHR21569:SF1">
    <property type="entry name" value="SMALL RIBOSOMAL SUBUNIT PROTEIN US9M"/>
    <property type="match status" value="1"/>
</dbReference>
<dbReference type="Pfam" id="PF00380">
    <property type="entry name" value="Ribosomal_S9"/>
    <property type="match status" value="1"/>
</dbReference>
<dbReference type="SUPFAM" id="SSF54211">
    <property type="entry name" value="Ribosomal protein S5 domain 2-like"/>
    <property type="match status" value="1"/>
</dbReference>
<dbReference type="PROSITE" id="PS00360">
    <property type="entry name" value="RIBOSOMAL_S9"/>
    <property type="match status" value="1"/>
</dbReference>
<sequence>MSNVEYKGLGRRKSSVAHVKLVPGTGKILINQRKPNEYFPNSLVIQDMEQPLVITDTRKNFDVFVKVVGGGFTGQAGAIRLGIARALLVANNDFRKTLKVSKMLTRDPRAKERKKYGLYGARRSPQFTKR</sequence>
<comment type="similarity">
    <text evidence="1">Belongs to the universal ribosomal protein uS9 family.</text>
</comment>
<evidence type="ECO:0000255" key="1">
    <source>
        <dbReference type="HAMAP-Rule" id="MF_00532"/>
    </source>
</evidence>
<evidence type="ECO:0000256" key="2">
    <source>
        <dbReference type="SAM" id="MobiDB-lite"/>
    </source>
</evidence>
<evidence type="ECO:0000305" key="3"/>